<evidence type="ECO:0000255" key="1">
    <source>
        <dbReference type="HAMAP-Rule" id="MF_00270"/>
    </source>
</evidence>
<evidence type="ECO:0000305" key="2"/>
<keyword id="KW-0687">Ribonucleoprotein</keyword>
<keyword id="KW-0689">Ribosomal protein</keyword>
<keyword id="KW-0694">RNA-binding</keyword>
<keyword id="KW-0699">rRNA-binding</keyword>
<dbReference type="EMBL" id="BX640430">
    <property type="protein sequence ID" value="CAE37763.1"/>
    <property type="molecule type" value="Genomic_DNA"/>
</dbReference>
<dbReference type="RefSeq" id="WP_003813094.1">
    <property type="nucleotide sequence ID" value="NC_002928.3"/>
</dbReference>
<dbReference type="SMR" id="Q7W7P6"/>
<dbReference type="GeneID" id="93204252"/>
<dbReference type="KEGG" id="bpa:BPP2468"/>
<dbReference type="HOGENOM" id="CLU_148710_0_3_4"/>
<dbReference type="Proteomes" id="UP000001421">
    <property type="component" value="Chromosome"/>
</dbReference>
<dbReference type="GO" id="GO:0022627">
    <property type="term" value="C:cytosolic small ribosomal subunit"/>
    <property type="evidence" value="ECO:0007669"/>
    <property type="project" value="TreeGrafter"/>
</dbReference>
<dbReference type="GO" id="GO:0070181">
    <property type="term" value="F:small ribosomal subunit rRNA binding"/>
    <property type="evidence" value="ECO:0007669"/>
    <property type="project" value="TreeGrafter"/>
</dbReference>
<dbReference type="GO" id="GO:0003735">
    <property type="term" value="F:structural constituent of ribosome"/>
    <property type="evidence" value="ECO:0007669"/>
    <property type="project" value="InterPro"/>
</dbReference>
<dbReference type="GO" id="GO:0006412">
    <property type="term" value="P:translation"/>
    <property type="evidence" value="ECO:0007669"/>
    <property type="project" value="UniProtKB-UniRule"/>
</dbReference>
<dbReference type="Gene3D" id="4.10.640.10">
    <property type="entry name" value="Ribosomal protein S18"/>
    <property type="match status" value="1"/>
</dbReference>
<dbReference type="HAMAP" id="MF_00270">
    <property type="entry name" value="Ribosomal_bS18"/>
    <property type="match status" value="1"/>
</dbReference>
<dbReference type="InterPro" id="IPR001648">
    <property type="entry name" value="Ribosomal_bS18"/>
</dbReference>
<dbReference type="InterPro" id="IPR018275">
    <property type="entry name" value="Ribosomal_bS18_CS"/>
</dbReference>
<dbReference type="InterPro" id="IPR036870">
    <property type="entry name" value="Ribosomal_bS18_sf"/>
</dbReference>
<dbReference type="NCBIfam" id="TIGR00165">
    <property type="entry name" value="S18"/>
    <property type="match status" value="1"/>
</dbReference>
<dbReference type="PANTHER" id="PTHR13479">
    <property type="entry name" value="30S RIBOSOMAL PROTEIN S18"/>
    <property type="match status" value="1"/>
</dbReference>
<dbReference type="PANTHER" id="PTHR13479:SF40">
    <property type="entry name" value="SMALL RIBOSOMAL SUBUNIT PROTEIN BS18M"/>
    <property type="match status" value="1"/>
</dbReference>
<dbReference type="Pfam" id="PF01084">
    <property type="entry name" value="Ribosomal_S18"/>
    <property type="match status" value="1"/>
</dbReference>
<dbReference type="PRINTS" id="PR00974">
    <property type="entry name" value="RIBOSOMALS18"/>
</dbReference>
<dbReference type="SUPFAM" id="SSF46911">
    <property type="entry name" value="Ribosomal protein S18"/>
    <property type="match status" value="1"/>
</dbReference>
<dbReference type="PROSITE" id="PS00057">
    <property type="entry name" value="RIBOSOMAL_S18"/>
    <property type="match status" value="1"/>
</dbReference>
<proteinExistence type="inferred from homology"/>
<sequence length="90" mass="10711">MAFFGKRKEKRKFTQQNPLFKRRKFCRFTAAGVEEIDYKDLDTLRDFVQENGKIIPARLTGTRAIYQRQLDTAIKRARFLALLPYTDNHK</sequence>
<organism>
    <name type="scientific">Bordetella parapertussis (strain 12822 / ATCC BAA-587 / NCTC 13253)</name>
    <dbReference type="NCBI Taxonomy" id="257311"/>
    <lineage>
        <taxon>Bacteria</taxon>
        <taxon>Pseudomonadati</taxon>
        <taxon>Pseudomonadota</taxon>
        <taxon>Betaproteobacteria</taxon>
        <taxon>Burkholderiales</taxon>
        <taxon>Alcaligenaceae</taxon>
        <taxon>Bordetella</taxon>
    </lineage>
</organism>
<protein>
    <recommendedName>
        <fullName evidence="1">Small ribosomal subunit protein bS18</fullName>
    </recommendedName>
    <alternativeName>
        <fullName evidence="2">30S ribosomal protein S18</fullName>
    </alternativeName>
</protein>
<gene>
    <name evidence="1" type="primary">rpsR</name>
    <name type="ordered locus">BPP2468</name>
</gene>
<feature type="chain" id="PRO_0000111125" description="Small ribosomal subunit protein bS18">
    <location>
        <begin position="1"/>
        <end position="90"/>
    </location>
</feature>
<accession>Q7W7P6</accession>
<name>RS18_BORPA</name>
<comment type="function">
    <text evidence="1">Binds as a heterodimer with protein bS6 to the central domain of the 16S rRNA, where it helps stabilize the platform of the 30S subunit.</text>
</comment>
<comment type="subunit">
    <text evidence="1">Part of the 30S ribosomal subunit. Forms a tight heterodimer with protein bS6.</text>
</comment>
<comment type="similarity">
    <text evidence="1">Belongs to the bacterial ribosomal protein bS18 family.</text>
</comment>
<reference key="1">
    <citation type="journal article" date="2003" name="Nat. Genet.">
        <title>Comparative analysis of the genome sequences of Bordetella pertussis, Bordetella parapertussis and Bordetella bronchiseptica.</title>
        <authorList>
            <person name="Parkhill J."/>
            <person name="Sebaihia M."/>
            <person name="Preston A."/>
            <person name="Murphy L.D."/>
            <person name="Thomson N.R."/>
            <person name="Harris D.E."/>
            <person name="Holden M.T.G."/>
            <person name="Churcher C.M."/>
            <person name="Bentley S.D."/>
            <person name="Mungall K.L."/>
            <person name="Cerdeno-Tarraga A.-M."/>
            <person name="Temple L."/>
            <person name="James K.D."/>
            <person name="Harris B."/>
            <person name="Quail M.A."/>
            <person name="Achtman M."/>
            <person name="Atkin R."/>
            <person name="Baker S."/>
            <person name="Basham D."/>
            <person name="Bason N."/>
            <person name="Cherevach I."/>
            <person name="Chillingworth T."/>
            <person name="Collins M."/>
            <person name="Cronin A."/>
            <person name="Davis P."/>
            <person name="Doggett J."/>
            <person name="Feltwell T."/>
            <person name="Goble A."/>
            <person name="Hamlin N."/>
            <person name="Hauser H."/>
            <person name="Holroyd S."/>
            <person name="Jagels K."/>
            <person name="Leather S."/>
            <person name="Moule S."/>
            <person name="Norberczak H."/>
            <person name="O'Neil S."/>
            <person name="Ormond D."/>
            <person name="Price C."/>
            <person name="Rabbinowitsch E."/>
            <person name="Rutter S."/>
            <person name="Sanders M."/>
            <person name="Saunders D."/>
            <person name="Seeger K."/>
            <person name="Sharp S."/>
            <person name="Simmonds M."/>
            <person name="Skelton J."/>
            <person name="Squares R."/>
            <person name="Squares S."/>
            <person name="Stevens K."/>
            <person name="Unwin L."/>
            <person name="Whitehead S."/>
            <person name="Barrell B.G."/>
            <person name="Maskell D.J."/>
        </authorList>
    </citation>
    <scope>NUCLEOTIDE SEQUENCE [LARGE SCALE GENOMIC DNA]</scope>
    <source>
        <strain>12822 / ATCC BAA-587 / NCTC 13253</strain>
    </source>
</reference>